<sequence length="426" mass="49336">MTSNEELLQNYCSILFTYKTIGISNLHLYYFRETEIKSLRQLINAEFAILQTCNRVEIYLYSNTNTISEINKMIQYLNNVHNEPIGNQARVICGKDSIKHLFLVASGADSLSIGEYEILSQIRSTIDMFKKLGFSGKYLQILFERAIKVGRKVREETSISKGKVGIYSLAIDEAKRQFNNFYDRKIVIVGAGEMGQKIANMLYNEGVKNVTIMNRTVEKAKQLALKFGYNYEKLDLDKLGSFDIAFISISHENLRLENKWNTLIVDITVPPLFTGNNVITLEELEKISKLNFKAREEELVKINKLVEDGIDELIYDYKKEIYSEFMSKIMKRVETIRENEIVRAYKELEKLGINNQQVKEILDLMTRSIIKKSFQPLFDNVRSLVFDGENSINYINFLIDIFKDGNIPIFETKKIKKKQISKRSSS</sequence>
<protein>
    <recommendedName>
        <fullName evidence="1">Glutamyl-tRNA reductase</fullName>
        <shortName evidence="1">GluTR</shortName>
        <ecNumber evidence="1">1.2.1.70</ecNumber>
    </recommendedName>
</protein>
<organism>
    <name type="scientific">Saccharolobus islandicus (strain M.16.27)</name>
    <name type="common">Sulfolobus islandicus</name>
    <dbReference type="NCBI Taxonomy" id="427318"/>
    <lineage>
        <taxon>Archaea</taxon>
        <taxon>Thermoproteota</taxon>
        <taxon>Thermoprotei</taxon>
        <taxon>Sulfolobales</taxon>
        <taxon>Sulfolobaceae</taxon>
        <taxon>Saccharolobus</taxon>
    </lineage>
</organism>
<dbReference type="EC" id="1.2.1.70" evidence="1"/>
<dbReference type="EMBL" id="CP001401">
    <property type="protein sequence ID" value="ACP55903.1"/>
    <property type="molecule type" value="Genomic_DNA"/>
</dbReference>
<dbReference type="RefSeq" id="WP_012711926.1">
    <property type="nucleotide sequence ID" value="NC_012632.1"/>
</dbReference>
<dbReference type="SMR" id="C3MZS1"/>
<dbReference type="KEGG" id="sim:M1627_2033"/>
<dbReference type="HOGENOM" id="CLU_035113_0_0_2"/>
<dbReference type="UniPathway" id="UPA00251">
    <property type="reaction ID" value="UER00316"/>
</dbReference>
<dbReference type="Proteomes" id="UP000002307">
    <property type="component" value="Chromosome"/>
</dbReference>
<dbReference type="GO" id="GO:0008883">
    <property type="term" value="F:glutamyl-tRNA reductase activity"/>
    <property type="evidence" value="ECO:0007669"/>
    <property type="project" value="UniProtKB-UniRule"/>
</dbReference>
<dbReference type="GO" id="GO:0050661">
    <property type="term" value="F:NADP binding"/>
    <property type="evidence" value="ECO:0007669"/>
    <property type="project" value="InterPro"/>
</dbReference>
<dbReference type="GO" id="GO:0019353">
    <property type="term" value="P:protoporphyrinogen IX biosynthetic process from glutamate"/>
    <property type="evidence" value="ECO:0007669"/>
    <property type="project" value="TreeGrafter"/>
</dbReference>
<dbReference type="CDD" id="cd05213">
    <property type="entry name" value="NAD_bind_Glutamyl_tRNA_reduct"/>
    <property type="match status" value="1"/>
</dbReference>
<dbReference type="FunFam" id="3.30.460.30:FF:000002">
    <property type="entry name" value="Glutamyl-tRNA reductase"/>
    <property type="match status" value="1"/>
</dbReference>
<dbReference type="Gene3D" id="3.30.460.30">
    <property type="entry name" value="Glutamyl-tRNA reductase, N-terminal domain"/>
    <property type="match status" value="1"/>
</dbReference>
<dbReference type="Gene3D" id="3.40.50.720">
    <property type="entry name" value="NAD(P)-binding Rossmann-like Domain"/>
    <property type="match status" value="1"/>
</dbReference>
<dbReference type="HAMAP" id="MF_00087">
    <property type="entry name" value="Glu_tRNA_reductase"/>
    <property type="match status" value="1"/>
</dbReference>
<dbReference type="InterPro" id="IPR000343">
    <property type="entry name" value="4pyrrol_synth_GluRdtase"/>
</dbReference>
<dbReference type="InterPro" id="IPR015896">
    <property type="entry name" value="4pyrrol_synth_GluRdtase_dimer"/>
</dbReference>
<dbReference type="InterPro" id="IPR015895">
    <property type="entry name" value="4pyrrol_synth_GluRdtase_N"/>
</dbReference>
<dbReference type="InterPro" id="IPR018214">
    <property type="entry name" value="GluRdtase_CS"/>
</dbReference>
<dbReference type="InterPro" id="IPR036453">
    <property type="entry name" value="GluRdtase_dimer_dom_sf"/>
</dbReference>
<dbReference type="InterPro" id="IPR036343">
    <property type="entry name" value="GluRdtase_N_sf"/>
</dbReference>
<dbReference type="InterPro" id="IPR036291">
    <property type="entry name" value="NAD(P)-bd_dom_sf"/>
</dbReference>
<dbReference type="InterPro" id="IPR006151">
    <property type="entry name" value="Shikm_DH/Glu-tRNA_Rdtase"/>
</dbReference>
<dbReference type="NCBIfam" id="TIGR01035">
    <property type="entry name" value="hemA"/>
    <property type="match status" value="1"/>
</dbReference>
<dbReference type="NCBIfam" id="NF000751">
    <property type="entry name" value="PRK00045.4-1"/>
    <property type="match status" value="1"/>
</dbReference>
<dbReference type="NCBIfam" id="NF000752">
    <property type="entry name" value="PRK00045.4-2"/>
    <property type="match status" value="1"/>
</dbReference>
<dbReference type="PANTHER" id="PTHR43013">
    <property type="entry name" value="GLUTAMYL-TRNA REDUCTASE"/>
    <property type="match status" value="1"/>
</dbReference>
<dbReference type="PANTHER" id="PTHR43013:SF1">
    <property type="entry name" value="GLUTAMYL-TRNA REDUCTASE"/>
    <property type="match status" value="1"/>
</dbReference>
<dbReference type="Pfam" id="PF00745">
    <property type="entry name" value="GlutR_dimer"/>
    <property type="match status" value="1"/>
</dbReference>
<dbReference type="Pfam" id="PF05201">
    <property type="entry name" value="GlutR_N"/>
    <property type="match status" value="1"/>
</dbReference>
<dbReference type="Pfam" id="PF01488">
    <property type="entry name" value="Shikimate_DH"/>
    <property type="match status" value="1"/>
</dbReference>
<dbReference type="PIRSF" id="PIRSF000445">
    <property type="entry name" value="4pyrrol_synth_GluRdtase"/>
    <property type="match status" value="1"/>
</dbReference>
<dbReference type="SUPFAM" id="SSF69742">
    <property type="entry name" value="Glutamyl tRNA-reductase catalytic, N-terminal domain"/>
    <property type="match status" value="1"/>
</dbReference>
<dbReference type="SUPFAM" id="SSF69075">
    <property type="entry name" value="Glutamyl tRNA-reductase dimerization domain"/>
    <property type="match status" value="1"/>
</dbReference>
<dbReference type="SUPFAM" id="SSF51735">
    <property type="entry name" value="NAD(P)-binding Rossmann-fold domains"/>
    <property type="match status" value="1"/>
</dbReference>
<dbReference type="PROSITE" id="PS00747">
    <property type="entry name" value="GLUTR"/>
    <property type="match status" value="1"/>
</dbReference>
<feature type="chain" id="PRO_1000202642" description="Glutamyl-tRNA reductase">
    <location>
        <begin position="1"/>
        <end position="426"/>
    </location>
</feature>
<feature type="active site" description="Nucleophile" evidence="1">
    <location>
        <position position="53"/>
    </location>
</feature>
<feature type="binding site" evidence="1">
    <location>
        <begin position="52"/>
        <end position="55"/>
    </location>
    <ligand>
        <name>substrate</name>
    </ligand>
</feature>
<feature type="binding site" evidence="1">
    <location>
        <position position="110"/>
    </location>
    <ligand>
        <name>substrate</name>
    </ligand>
</feature>
<feature type="binding site" evidence="1">
    <location>
        <begin position="115"/>
        <end position="117"/>
    </location>
    <ligand>
        <name>substrate</name>
    </ligand>
</feature>
<feature type="binding site" evidence="1">
    <location>
        <position position="121"/>
    </location>
    <ligand>
        <name>substrate</name>
    </ligand>
</feature>
<feature type="binding site" evidence="1">
    <location>
        <begin position="190"/>
        <end position="195"/>
    </location>
    <ligand>
        <name>NADP(+)</name>
        <dbReference type="ChEBI" id="CHEBI:58349"/>
    </ligand>
</feature>
<feature type="site" description="Important for activity" evidence="1">
    <location>
        <position position="100"/>
    </location>
</feature>
<evidence type="ECO:0000255" key="1">
    <source>
        <dbReference type="HAMAP-Rule" id="MF_00087"/>
    </source>
</evidence>
<name>HEM1_SACI3</name>
<reference key="1">
    <citation type="journal article" date="2009" name="Proc. Natl. Acad. Sci. U.S.A.">
        <title>Biogeography of the Sulfolobus islandicus pan-genome.</title>
        <authorList>
            <person name="Reno M.L."/>
            <person name="Held N.L."/>
            <person name="Fields C.J."/>
            <person name="Burke P.V."/>
            <person name="Whitaker R.J."/>
        </authorList>
    </citation>
    <scope>NUCLEOTIDE SEQUENCE [LARGE SCALE GENOMIC DNA]</scope>
    <source>
        <strain>M.16.27</strain>
    </source>
</reference>
<keyword id="KW-0521">NADP</keyword>
<keyword id="KW-0560">Oxidoreductase</keyword>
<keyword id="KW-0627">Porphyrin biosynthesis</keyword>
<gene>
    <name evidence="1" type="primary">hemA</name>
    <name type="ordered locus">M1627_2033</name>
</gene>
<accession>C3MZS1</accession>
<comment type="function">
    <text evidence="1">Catalyzes the NADPH-dependent reduction of glutamyl-tRNA(Glu) to glutamate 1-semialdehyde (GSA).</text>
</comment>
<comment type="catalytic activity">
    <reaction evidence="1">
        <text>(S)-4-amino-5-oxopentanoate + tRNA(Glu) + NADP(+) = L-glutamyl-tRNA(Glu) + NADPH + H(+)</text>
        <dbReference type="Rhea" id="RHEA:12344"/>
        <dbReference type="Rhea" id="RHEA-COMP:9663"/>
        <dbReference type="Rhea" id="RHEA-COMP:9680"/>
        <dbReference type="ChEBI" id="CHEBI:15378"/>
        <dbReference type="ChEBI" id="CHEBI:57501"/>
        <dbReference type="ChEBI" id="CHEBI:57783"/>
        <dbReference type="ChEBI" id="CHEBI:58349"/>
        <dbReference type="ChEBI" id="CHEBI:78442"/>
        <dbReference type="ChEBI" id="CHEBI:78520"/>
        <dbReference type="EC" id="1.2.1.70"/>
    </reaction>
</comment>
<comment type="pathway">
    <text evidence="1">Porphyrin-containing compound metabolism; protoporphyrin-IX biosynthesis; 5-aminolevulinate from L-glutamyl-tRNA(Glu): step 1/2.</text>
</comment>
<comment type="subunit">
    <text evidence="1">Homodimer.</text>
</comment>
<comment type="domain">
    <text evidence="1">Possesses an unusual extended V-shaped dimeric structure with each monomer consisting of three distinct domains arranged along a curved 'spinal' alpha-helix. The N-terminal catalytic domain specifically recognizes the glutamate moiety of the substrate. The second domain is the NADPH-binding domain, and the third C-terminal domain is responsible for dimerization.</text>
</comment>
<comment type="miscellaneous">
    <text evidence="1">During catalysis, the active site Cys acts as a nucleophile attacking the alpha-carbonyl group of tRNA-bound glutamate with the formation of a thioester intermediate between enzyme and glutamate, and the concomitant release of tRNA(Glu). The thioester intermediate is finally reduced by direct hydride transfer from NADPH, to form the product GSA.</text>
</comment>
<comment type="similarity">
    <text evidence="1">Belongs to the glutamyl-tRNA reductase family.</text>
</comment>
<proteinExistence type="inferred from homology"/>